<name>GBG5_RAT</name>
<proteinExistence type="inferred from homology"/>
<accession>P63219</accession>
<accession>P30670</accession>
<accession>Q61015</accession>
<gene>
    <name type="primary">Gng5</name>
    <name type="synonym">Gngt5</name>
</gene>
<keyword id="KW-0007">Acetylation</keyword>
<keyword id="KW-1003">Cell membrane</keyword>
<keyword id="KW-0449">Lipoprotein</keyword>
<keyword id="KW-0472">Membrane</keyword>
<keyword id="KW-0488">Methylation</keyword>
<keyword id="KW-0597">Phosphoprotein</keyword>
<keyword id="KW-0636">Prenylation</keyword>
<keyword id="KW-1185">Reference proteome</keyword>
<keyword id="KW-0807">Transducer</keyword>
<sequence length="68" mass="7318">MSGSSSVAAMKKVVQQLRLEAGLNRVKVSQAAADLKQFCLQNAQHDPLLTGVSSSTNPFRPQKVCSFL</sequence>
<dbReference type="EMBL" id="M95780">
    <property type="protein sequence ID" value="AAA41188.1"/>
    <property type="molecule type" value="mRNA"/>
</dbReference>
<dbReference type="EMBL" id="BC058469">
    <property type="protein sequence ID" value="AAH58469.1"/>
    <property type="molecule type" value="mRNA"/>
</dbReference>
<dbReference type="RefSeq" id="NP_077353.1">
    <property type="nucleotide sequence ID" value="NM_024377.2"/>
</dbReference>
<dbReference type="RefSeq" id="XP_017445483.1">
    <property type="nucleotide sequence ID" value="XM_017589994.1"/>
</dbReference>
<dbReference type="RefSeq" id="XP_017460456.1">
    <property type="nucleotide sequence ID" value="XM_017604967.1"/>
</dbReference>
<dbReference type="SMR" id="P63219"/>
<dbReference type="FunCoup" id="P63219">
    <property type="interactions" value="1129"/>
</dbReference>
<dbReference type="STRING" id="10116.ENSRNOP00000021358"/>
<dbReference type="PhosphoSitePlus" id="P63219"/>
<dbReference type="jPOST" id="P63219"/>
<dbReference type="PaxDb" id="10116-ENSRNOP00000021358"/>
<dbReference type="Ensembl" id="ENSRNOT00000105080.1">
    <property type="protein sequence ID" value="ENSRNOP00000087679.1"/>
    <property type="gene ID" value="ENSRNOG00000063636.1"/>
</dbReference>
<dbReference type="GeneID" id="79218"/>
<dbReference type="KEGG" id="rno:79218"/>
<dbReference type="AGR" id="RGD:620807"/>
<dbReference type="CTD" id="2787"/>
<dbReference type="RGD" id="620807">
    <property type="gene designation" value="Gng5"/>
</dbReference>
<dbReference type="VEuPathDB" id="HostDB:ENSRNOG00000038205"/>
<dbReference type="eggNOG" id="KOG4119">
    <property type="taxonomic scope" value="Eukaryota"/>
</dbReference>
<dbReference type="GeneTree" id="ENSGT01100000263525"/>
<dbReference type="HOGENOM" id="CLU_168377_3_0_1"/>
<dbReference type="InParanoid" id="P63219"/>
<dbReference type="OrthoDB" id="6264244at2759"/>
<dbReference type="PhylomeDB" id="P63219"/>
<dbReference type="TreeFam" id="TF319909"/>
<dbReference type="Reactome" id="R-RNO-1296041">
    <property type="pathway name" value="Activation of G protein gated Potassium channels"/>
</dbReference>
<dbReference type="Reactome" id="R-RNO-202040">
    <property type="pathway name" value="G-protein activation"/>
</dbReference>
<dbReference type="Reactome" id="R-RNO-381676">
    <property type="pathway name" value="Glucagon-like Peptide-1 (GLP1) regulates insulin secretion"/>
</dbReference>
<dbReference type="Reactome" id="R-RNO-392170">
    <property type="pathway name" value="ADP signalling through P2Y purinoceptor 12"/>
</dbReference>
<dbReference type="Reactome" id="R-RNO-392451">
    <property type="pathway name" value="G beta:gamma signalling through PI3Kgamma"/>
</dbReference>
<dbReference type="Reactome" id="R-RNO-400042">
    <property type="pathway name" value="Adrenaline,noradrenaline inhibits insulin secretion"/>
</dbReference>
<dbReference type="Reactome" id="R-RNO-4086398">
    <property type="pathway name" value="Ca2+ pathway"/>
</dbReference>
<dbReference type="Reactome" id="R-RNO-416476">
    <property type="pathway name" value="G alpha (q) signalling events"/>
</dbReference>
<dbReference type="Reactome" id="R-RNO-418594">
    <property type="pathway name" value="G alpha (i) signalling events"/>
</dbReference>
<dbReference type="Reactome" id="R-RNO-418597">
    <property type="pathway name" value="G alpha (z) signalling events"/>
</dbReference>
<dbReference type="Reactome" id="R-RNO-420092">
    <property type="pathway name" value="Glucagon-type ligand receptors"/>
</dbReference>
<dbReference type="Reactome" id="R-RNO-428930">
    <property type="pathway name" value="Thromboxane signalling through TP receptor"/>
</dbReference>
<dbReference type="Reactome" id="R-RNO-432040">
    <property type="pathway name" value="Vasopressin regulates renal water homeostasis via Aquaporins"/>
</dbReference>
<dbReference type="Reactome" id="R-RNO-456926">
    <property type="pathway name" value="Thrombin signalling through proteinase activated receptors (PARs)"/>
</dbReference>
<dbReference type="Reactome" id="R-RNO-8964616">
    <property type="pathway name" value="G beta:gamma signalling through CDC42"/>
</dbReference>
<dbReference type="Reactome" id="R-RNO-9856530">
    <property type="pathway name" value="High laminar flow shear stress activates signaling by PIEZO1 and PECAM1:CDH5:KDR in endothelial cells"/>
</dbReference>
<dbReference type="Reactome" id="R-RNO-997272">
    <property type="pathway name" value="Inhibition of voltage gated Ca2+ channels via Gbeta/gamma subunits"/>
</dbReference>
<dbReference type="PRO" id="PR:P63219"/>
<dbReference type="Proteomes" id="UP000002494">
    <property type="component" value="Chromosome 1"/>
</dbReference>
<dbReference type="Bgee" id="ENSRNOG00000015936">
    <property type="expression patterns" value="Expressed in quadriceps femoris and 19 other cell types or tissues"/>
</dbReference>
<dbReference type="GO" id="GO:0031680">
    <property type="term" value="C:G-protein beta/gamma-subunit complex"/>
    <property type="evidence" value="ECO:0000314"/>
    <property type="project" value="MGI"/>
</dbReference>
<dbReference type="GO" id="GO:0005834">
    <property type="term" value="C:heterotrimeric G-protein complex"/>
    <property type="evidence" value="ECO:0000318"/>
    <property type="project" value="GO_Central"/>
</dbReference>
<dbReference type="GO" id="GO:0031681">
    <property type="term" value="F:G-protein beta-subunit binding"/>
    <property type="evidence" value="ECO:0000318"/>
    <property type="project" value="GO_Central"/>
</dbReference>
<dbReference type="GO" id="GO:0030165">
    <property type="term" value="F:PDZ domain binding"/>
    <property type="evidence" value="ECO:0000266"/>
    <property type="project" value="RGD"/>
</dbReference>
<dbReference type="GO" id="GO:0007186">
    <property type="term" value="P:G protein-coupled receptor signaling pathway"/>
    <property type="evidence" value="ECO:0000318"/>
    <property type="project" value="GO_Central"/>
</dbReference>
<dbReference type="GO" id="GO:2000179">
    <property type="term" value="P:positive regulation of neural precursor cell proliferation"/>
    <property type="evidence" value="ECO:0000266"/>
    <property type="project" value="RGD"/>
</dbReference>
<dbReference type="GO" id="GO:0072513">
    <property type="term" value="P:positive regulation of secondary heart field cardioblast proliferation"/>
    <property type="evidence" value="ECO:0000266"/>
    <property type="project" value="RGD"/>
</dbReference>
<dbReference type="CDD" id="cd00068">
    <property type="entry name" value="GGL"/>
    <property type="match status" value="1"/>
</dbReference>
<dbReference type="FunFam" id="4.10.260.10:FF:000001">
    <property type="entry name" value="Guanine nucleotide-binding protein subunit gamma"/>
    <property type="match status" value="1"/>
</dbReference>
<dbReference type="Gene3D" id="4.10.260.10">
    <property type="entry name" value="Transducin (heterotrimeric G protein), gamma chain"/>
    <property type="match status" value="1"/>
</dbReference>
<dbReference type="InterPro" id="IPR015898">
    <property type="entry name" value="G-protein_gamma-like_dom"/>
</dbReference>
<dbReference type="InterPro" id="IPR036284">
    <property type="entry name" value="GGL_sf"/>
</dbReference>
<dbReference type="InterPro" id="IPR001770">
    <property type="entry name" value="Gprotein-gamma"/>
</dbReference>
<dbReference type="PANTHER" id="PTHR13809">
    <property type="entry name" value="GUANINE NUCLEOTIDE-BINDING PROTEIN GAMMA SUBUNIT"/>
    <property type="match status" value="1"/>
</dbReference>
<dbReference type="Pfam" id="PF00631">
    <property type="entry name" value="G-gamma"/>
    <property type="match status" value="1"/>
</dbReference>
<dbReference type="PRINTS" id="PR00321">
    <property type="entry name" value="GPROTEING"/>
</dbReference>
<dbReference type="SMART" id="SM01224">
    <property type="entry name" value="G_gamma"/>
    <property type="match status" value="1"/>
</dbReference>
<dbReference type="SMART" id="SM00224">
    <property type="entry name" value="GGL"/>
    <property type="match status" value="1"/>
</dbReference>
<dbReference type="SUPFAM" id="SSF48670">
    <property type="entry name" value="Transducin (heterotrimeric G protein), gamma chain"/>
    <property type="match status" value="1"/>
</dbReference>
<dbReference type="PROSITE" id="PS50058">
    <property type="entry name" value="G_PROTEIN_GAMMA"/>
    <property type="match status" value="1"/>
</dbReference>
<feature type="initiator methionine" description="Removed" evidence="2">
    <location>
        <position position="1"/>
    </location>
</feature>
<feature type="chain" id="PRO_0000012631" description="Guanine nucleotide-binding protein G(I)/G(S)/G(O) subunit gamma-5">
    <location>
        <begin position="2"/>
        <end position="65"/>
    </location>
</feature>
<feature type="propeptide" id="PRO_0000012632" description="Removed in mature form" evidence="1">
    <location>
        <begin position="66"/>
        <end position="68"/>
    </location>
</feature>
<feature type="modified residue" description="N-acetylserine" evidence="2">
    <location>
        <position position="2"/>
    </location>
</feature>
<feature type="modified residue" description="Phosphoserine" evidence="2">
    <location>
        <position position="2"/>
    </location>
</feature>
<feature type="modified residue" description="Cysteine methyl ester" evidence="1">
    <location>
        <position position="65"/>
    </location>
</feature>
<feature type="lipid moiety-binding region" description="S-geranylgeranyl cysteine" evidence="1">
    <location>
        <position position="65"/>
    </location>
</feature>
<comment type="function">
    <text>Guanine nucleotide-binding proteins (G proteins) are involved as a modulator or transducer in various transmembrane signaling systems. The beta and gamma chains are required for the GTPase activity, for replacement of GDP by GTP, and for G protein-effector interaction.</text>
</comment>
<comment type="subunit">
    <text>G proteins are composed of 3 units, alpha, beta and gamma.</text>
</comment>
<comment type="subcellular location">
    <subcellularLocation>
        <location evidence="3">Cell membrane</location>
        <topology evidence="3">Lipid-anchor</topology>
        <orientation evidence="3">Cytoplasmic side</orientation>
    </subcellularLocation>
</comment>
<comment type="similarity">
    <text evidence="3">Belongs to the G protein gamma family.</text>
</comment>
<organism>
    <name type="scientific">Rattus norvegicus</name>
    <name type="common">Rat</name>
    <dbReference type="NCBI Taxonomy" id="10116"/>
    <lineage>
        <taxon>Eukaryota</taxon>
        <taxon>Metazoa</taxon>
        <taxon>Chordata</taxon>
        <taxon>Craniata</taxon>
        <taxon>Vertebrata</taxon>
        <taxon>Euteleostomi</taxon>
        <taxon>Mammalia</taxon>
        <taxon>Eutheria</taxon>
        <taxon>Euarchontoglires</taxon>
        <taxon>Glires</taxon>
        <taxon>Rodentia</taxon>
        <taxon>Myomorpha</taxon>
        <taxon>Muroidea</taxon>
        <taxon>Muridae</taxon>
        <taxon>Murinae</taxon>
        <taxon>Rattus</taxon>
    </lineage>
</organism>
<evidence type="ECO:0000250" key="1"/>
<evidence type="ECO:0000250" key="2">
    <source>
        <dbReference type="UniProtKB" id="P63218"/>
    </source>
</evidence>
<evidence type="ECO:0000305" key="3"/>
<protein>
    <recommendedName>
        <fullName>Guanine nucleotide-binding protein G(I)/G(S)/G(O) subunit gamma-5</fullName>
    </recommendedName>
</protein>
<reference key="1">
    <citation type="journal article" date="1992" name="Mol. Cell. Biol.">
        <title>Characterization of the cDNA and genomic sequence of a G protein gamma subunit (gamma 5).</title>
        <authorList>
            <person name="Fisher K.J."/>
            <person name="Aronson N.N. Jr."/>
        </authorList>
    </citation>
    <scope>NUCLEOTIDE SEQUENCE [MRNA]</scope>
    <source>
        <tissue>Liver</tissue>
    </source>
</reference>
<reference key="2">
    <citation type="journal article" date="2004" name="Genome Res.">
        <title>The status, quality, and expansion of the NIH full-length cDNA project: the Mammalian Gene Collection (MGC).</title>
        <authorList>
            <consortium name="The MGC Project Team"/>
        </authorList>
    </citation>
    <scope>NUCLEOTIDE SEQUENCE [LARGE SCALE MRNA]</scope>
    <source>
        <tissue>Pituitary</tissue>
    </source>
</reference>